<proteinExistence type="evidence at protein level"/>
<reference evidence="8" key="1">
    <citation type="journal article" date="2011" name="PLoS Pathog.">
        <title>Genomic and proteomic analyses of the fungus Arthrobotrys oligospora provide insights into nematode-trap formation.</title>
        <authorList>
            <person name="Yang J."/>
            <person name="Wang L."/>
            <person name="Ji X."/>
            <person name="Feng Y."/>
            <person name="Li X."/>
            <person name="Zou C."/>
            <person name="Xu J."/>
            <person name="Ren Y."/>
            <person name="Mi Q."/>
            <person name="Wu J."/>
            <person name="Liu S."/>
            <person name="Liu Y."/>
            <person name="Huang X."/>
            <person name="Wang H."/>
            <person name="Niu X."/>
            <person name="Li J."/>
            <person name="Liang L."/>
            <person name="Luo Y."/>
            <person name="Ji K."/>
            <person name="Zhou W."/>
            <person name="Yu Z."/>
            <person name="Li G."/>
            <person name="Liu Y."/>
            <person name="Li L."/>
            <person name="Qiao M."/>
            <person name="Feng L."/>
            <person name="Zhang K.-Q."/>
        </authorList>
    </citation>
    <scope>NUCLEOTIDE SEQUENCE [LARGE SCALE GENOMIC DNA]</scope>
    <source>
        <strain evidence="8">ATCC 24927 / CBS 115.81 / DSM 1491</strain>
    </source>
</reference>
<reference evidence="6" key="2">
    <citation type="journal article" date="2024" name="Nat. Microbiol.">
        <title>The nematode-trapping fungus Arthrobotrys oligospora detects prey pheromones via G protein-coupled receptors.</title>
        <authorList>
            <person name="Kuo C.Y."/>
            <person name="Tay R.J."/>
            <person name="Lin H.C."/>
            <person name="Juan S.C."/>
            <person name="Vidal-Diez de Ulzurrun G."/>
            <person name="Chang Y.C."/>
            <person name="Hoki J."/>
            <person name="Schroeder F.C."/>
            <person name="Hsueh Y.P."/>
        </authorList>
    </citation>
    <scope>FUNCTION</scope>
    <scope>INTERACTION WITH GPA2 AND GPR2</scope>
    <scope>SUBCELLULAR LOCATION</scope>
    <scope>INDUCTION</scope>
    <scope>DISRUPTION PHENOTYPE</scope>
    <source>
        <strain evidence="5">TWF154</strain>
    </source>
</reference>
<organism evidence="8">
    <name type="scientific">Arthrobotrys oligospora (strain ATCC 24927 / CBS 115.81 / DSM 1491)</name>
    <name type="common">Nematode-trapping fungus</name>
    <name type="synonym">Didymozoophaga oligospora</name>
    <dbReference type="NCBI Taxonomy" id="756982"/>
    <lineage>
        <taxon>Eukaryota</taxon>
        <taxon>Fungi</taxon>
        <taxon>Dikarya</taxon>
        <taxon>Ascomycota</taxon>
        <taxon>Pezizomycotina</taxon>
        <taxon>Orbiliomycetes</taxon>
        <taxon>Orbiliales</taxon>
        <taxon>Orbiliaceae</taxon>
        <taxon>Orbilia</taxon>
        <taxon>Orbilia oligospora</taxon>
    </lineage>
</organism>
<protein>
    <recommendedName>
        <fullName evidence="6">Ascaroside receptor GPR3</fullName>
    </recommendedName>
</protein>
<accession>G1XJN1</accession>
<comment type="function">
    <text evidence="4">G protein-coupled receptor that senses nematode ascaroside pheromones and signals via adenylate cyclase to positively regulate trap formation for nematode capture.</text>
</comment>
<comment type="subunit">
    <text evidence="4">Interacts with ascaroside receptor GPR2; may form a functional heterodimer (PubMed:38649409). Interacts with guanine nucleotide-binding protein alpha GPA2; to activate adenylate cyclase and positively regulate nematode trap formation (PubMed:38649409).</text>
</comment>
<comment type="subcellular location">
    <subcellularLocation>
        <location evidence="4">Cell membrane</location>
        <topology evidence="1">Multi-pass membrane protein</topology>
    </subcellularLocation>
    <text evidence="4">Relocalizes to the vacuole following stimulation by ligand.</text>
</comment>
<comment type="induction">
    <text evidence="4">Induced following nematode exposure; induction is dependent on transciption factor STE12.</text>
</comment>
<comment type="disruption phenotype">
    <text evidence="4">Decreases cAMP levels following exposure to C.elegans (PubMed:38649409). Decreases trap formation following exposure to C.elegans ascarosides ascr#3 and ascr#7 (PubMed:38649409).</text>
</comment>
<comment type="similarity">
    <text evidence="6">Belongs to the G-protein coupled receptor 1 family.</text>
</comment>
<feature type="chain" id="PRO_0000462168" description="Ascaroside receptor GPR3">
    <location>
        <begin position="1"/>
        <end position="401"/>
    </location>
</feature>
<feature type="topological domain" description="Extracellular" evidence="6">
    <location>
        <begin position="1"/>
        <end position="16"/>
    </location>
</feature>
<feature type="transmembrane region" description="Helical" evidence="1">
    <location>
        <begin position="17"/>
        <end position="37"/>
    </location>
</feature>
<feature type="topological domain" description="Cytoplasmic" evidence="6">
    <location>
        <begin position="38"/>
        <end position="47"/>
    </location>
</feature>
<feature type="transmembrane region" description="Helical" evidence="1">
    <location>
        <begin position="48"/>
        <end position="68"/>
    </location>
</feature>
<feature type="topological domain" description="Extracellular" evidence="6">
    <location>
        <begin position="69"/>
        <end position="93"/>
    </location>
</feature>
<feature type="transmembrane region" description="Helical" evidence="1">
    <location>
        <begin position="94"/>
        <end position="114"/>
    </location>
</feature>
<feature type="topological domain" description="Cytoplasmic" evidence="6">
    <location>
        <begin position="115"/>
        <end position="128"/>
    </location>
</feature>
<feature type="transmembrane region" description="Helical" evidence="1">
    <location>
        <begin position="129"/>
        <end position="149"/>
    </location>
</feature>
<feature type="topological domain" description="Extracellular" evidence="6">
    <location>
        <begin position="150"/>
        <end position="175"/>
    </location>
</feature>
<feature type="transmembrane region" description="Helical" evidence="1">
    <location>
        <begin position="176"/>
        <end position="196"/>
    </location>
</feature>
<feature type="topological domain" description="Cytoplasmic" evidence="6">
    <location>
        <begin position="197"/>
        <end position="294"/>
    </location>
</feature>
<feature type="transmembrane region" description="Helical" evidence="1">
    <location>
        <begin position="295"/>
        <end position="315"/>
    </location>
</feature>
<feature type="topological domain" description="Extracellular" evidence="6">
    <location>
        <begin position="316"/>
        <end position="321"/>
    </location>
</feature>
<feature type="transmembrane region" description="Helical" evidence="1">
    <location>
        <begin position="322"/>
        <end position="342"/>
    </location>
</feature>
<feature type="topological domain" description="Cytoplasmic" evidence="6">
    <location>
        <begin position="343"/>
        <end position="401"/>
    </location>
</feature>
<feature type="region of interest" description="Disordered" evidence="3">
    <location>
        <begin position="206"/>
        <end position="259"/>
    </location>
</feature>
<feature type="region of interest" description="Disordered" evidence="3">
    <location>
        <begin position="362"/>
        <end position="401"/>
    </location>
</feature>
<feature type="compositionally biased region" description="Low complexity" evidence="3">
    <location>
        <begin position="239"/>
        <end position="257"/>
    </location>
</feature>
<feature type="compositionally biased region" description="Polar residues" evidence="3">
    <location>
        <begin position="391"/>
        <end position="401"/>
    </location>
</feature>
<feature type="disulfide bond" evidence="2">
    <location>
        <begin position="85"/>
        <end position="159"/>
    </location>
</feature>
<gene>
    <name evidence="5" type="primary">GPR3</name>
    <name evidence="7" type="ORF">AOL_s00097g558</name>
</gene>
<dbReference type="EMBL" id="ADOT01000177">
    <property type="protein sequence ID" value="EGX46654.1"/>
    <property type="molecule type" value="Genomic_DNA"/>
</dbReference>
<dbReference type="RefSeq" id="XP_011124693.1">
    <property type="nucleotide sequence ID" value="XM_011126391.1"/>
</dbReference>
<dbReference type="STRING" id="756982.G1XJN1"/>
<dbReference type="GeneID" id="22895630"/>
<dbReference type="eggNOG" id="ENOG502RZ52">
    <property type="taxonomic scope" value="Eukaryota"/>
</dbReference>
<dbReference type="HOGENOM" id="CLU_052065_0_0_1"/>
<dbReference type="InParanoid" id="G1XJN1"/>
<dbReference type="OMA" id="FAQIDVW"/>
<dbReference type="OrthoDB" id="1778475at2759"/>
<dbReference type="Proteomes" id="UP000008784">
    <property type="component" value="Unassembled WGS sequence"/>
</dbReference>
<dbReference type="GO" id="GO:0005886">
    <property type="term" value="C:plasma membrane"/>
    <property type="evidence" value="ECO:0007669"/>
    <property type="project" value="UniProtKB-SubCell"/>
</dbReference>
<dbReference type="GO" id="GO:0004930">
    <property type="term" value="F:G protein-coupled receptor activity"/>
    <property type="evidence" value="ECO:0007669"/>
    <property type="project" value="TreeGrafter"/>
</dbReference>
<dbReference type="GO" id="GO:0007189">
    <property type="term" value="P:adenylate cyclase-activating G protein-coupled receptor signaling pathway"/>
    <property type="evidence" value="ECO:0007669"/>
    <property type="project" value="TreeGrafter"/>
</dbReference>
<dbReference type="GO" id="GO:0007166">
    <property type="term" value="P:cell surface receptor signaling pathway"/>
    <property type="evidence" value="ECO:0007669"/>
    <property type="project" value="InterPro"/>
</dbReference>
<dbReference type="Gene3D" id="1.20.1070.10">
    <property type="entry name" value="Rhodopsin 7-helix transmembrane proteins"/>
    <property type="match status" value="1"/>
</dbReference>
<dbReference type="InterPro" id="IPR022343">
    <property type="entry name" value="GCR1-cAMP_receptor"/>
</dbReference>
<dbReference type="InterPro" id="IPR023041">
    <property type="entry name" value="Glucose_rcpt_Git3_N"/>
</dbReference>
<dbReference type="InterPro" id="IPR017981">
    <property type="entry name" value="GPCR_2-like_7TM"/>
</dbReference>
<dbReference type="InterPro" id="IPR022340">
    <property type="entry name" value="GPCR_GCR1_put"/>
</dbReference>
<dbReference type="InterPro" id="IPR017452">
    <property type="entry name" value="GPCR_Rhodpsn_7TM"/>
</dbReference>
<dbReference type="InterPro" id="IPR022596">
    <property type="entry name" value="GPR1_C"/>
</dbReference>
<dbReference type="PANTHER" id="PTHR23112">
    <property type="entry name" value="G PROTEIN-COUPLED RECEPTOR 157-RELATED"/>
    <property type="match status" value="1"/>
</dbReference>
<dbReference type="PANTHER" id="PTHR23112:SF0">
    <property type="entry name" value="TRANSMEMBRANE PROTEIN 116"/>
    <property type="match status" value="1"/>
</dbReference>
<dbReference type="Pfam" id="PF11710">
    <property type="entry name" value="Git3"/>
    <property type="match status" value="1"/>
</dbReference>
<dbReference type="Pfam" id="PF11970">
    <property type="entry name" value="GPR_Gpa2_C"/>
    <property type="match status" value="1"/>
</dbReference>
<dbReference type="PRINTS" id="PR02001">
    <property type="entry name" value="GCR1CAMPR"/>
</dbReference>
<dbReference type="PRINTS" id="PR02000">
    <property type="entry name" value="GCR1PLANT"/>
</dbReference>
<dbReference type="SUPFAM" id="SSF81321">
    <property type="entry name" value="Family A G protein-coupled receptor-like"/>
    <property type="match status" value="1"/>
</dbReference>
<dbReference type="PROSITE" id="PS50262">
    <property type="entry name" value="G_PROTEIN_RECEP_F1_2"/>
    <property type="match status" value="1"/>
</dbReference>
<dbReference type="PROSITE" id="PS50261">
    <property type="entry name" value="G_PROTEIN_RECEP_F2_4"/>
    <property type="match status" value="1"/>
</dbReference>
<name>GPR3_ARTOA</name>
<sequence length="401" mass="44703">MQPFGDAWSQRHLAGVVLAGSVLSIVGSLYMILGFFFLRECRSFRHKLILGLAVSDLLLALNFFIPSLSMVTGREISSPWNEGFCSANGFLMQLFFAQIDVWQISIALITLLMLSGPSMVLKWIRENVWAVWLFPWLVSLIAAFFAFGFWDYANVGGFCWLGSRNIRLYFNYIPRWIIILVCLVIYIAVYRLILHARRRANIQKTYRGRASDRAPPQPVTTTAPATNPESEKVNPDEISSGNGSSSLDTSRSGSSTGFTQTVHDPAVAGQIQTAAERAQEEAEQQKQVRKIAIQMISYPLAYAVLWAIPTIVMIIQVARGGEGVSIHVEGLAKMLLVFNGFVDAHVYGFNERTAMGWRQRIRPAAQEDDEEAAGTSGGVHEVVSRPEPTLKNPNVWQQNMV</sequence>
<evidence type="ECO:0000255" key="1"/>
<evidence type="ECO:0000255" key="2">
    <source>
        <dbReference type="PROSITE-ProRule" id="PRU00521"/>
    </source>
</evidence>
<evidence type="ECO:0000256" key="3">
    <source>
        <dbReference type="SAM" id="MobiDB-lite"/>
    </source>
</evidence>
<evidence type="ECO:0000269" key="4">
    <source>
    </source>
</evidence>
<evidence type="ECO:0000303" key="5">
    <source>
    </source>
</evidence>
<evidence type="ECO:0000305" key="6"/>
<evidence type="ECO:0000312" key="7">
    <source>
        <dbReference type="EMBL" id="EGX46654.1"/>
    </source>
</evidence>
<evidence type="ECO:0000312" key="8">
    <source>
        <dbReference type="Proteomes" id="UP000008784"/>
    </source>
</evidence>
<keyword id="KW-1003">Cell membrane</keyword>
<keyword id="KW-0175">Coiled coil</keyword>
<keyword id="KW-1015">Disulfide bond</keyword>
<keyword id="KW-0297">G-protein coupled receptor</keyword>
<keyword id="KW-0472">Membrane</keyword>
<keyword id="KW-0675">Receptor</keyword>
<keyword id="KW-1185">Reference proteome</keyword>
<keyword id="KW-0807">Transducer</keyword>
<keyword id="KW-0812">Transmembrane</keyword>
<keyword id="KW-1133">Transmembrane helix</keyword>